<feature type="chain" id="PRO_0000127059" description="Large ribosomal subunit protein eL39">
    <location>
        <begin position="1"/>
        <end position="51"/>
    </location>
</feature>
<sequence length="51" mass="6324">MARNKPLAKKLRLAKAMKQNRRVPVWVIVRTNRRVLTHPKRRHWRRTKLKE</sequence>
<accession>P59473</accession>
<protein>
    <recommendedName>
        <fullName evidence="1">Large ribosomal subunit protein eL39</fullName>
    </recommendedName>
    <alternativeName>
        <fullName>50S ribosomal protein L39e</fullName>
    </alternativeName>
</protein>
<dbReference type="EMBL" id="BA000001">
    <property type="status" value="NOT_ANNOTATED_CDS"/>
    <property type="molecule type" value="Genomic_DNA"/>
</dbReference>
<dbReference type="RefSeq" id="WP_010884631.1">
    <property type="nucleotide sequence ID" value="NC_000961.1"/>
</dbReference>
<dbReference type="SMR" id="P59473"/>
<dbReference type="GeneID" id="1444418"/>
<dbReference type="OrthoDB" id="65887at2157"/>
<dbReference type="Proteomes" id="UP000000752">
    <property type="component" value="Chromosome"/>
</dbReference>
<dbReference type="GO" id="GO:0022625">
    <property type="term" value="C:cytosolic large ribosomal subunit"/>
    <property type="evidence" value="ECO:0007669"/>
    <property type="project" value="TreeGrafter"/>
</dbReference>
<dbReference type="GO" id="GO:0003735">
    <property type="term" value="F:structural constituent of ribosome"/>
    <property type="evidence" value="ECO:0007669"/>
    <property type="project" value="InterPro"/>
</dbReference>
<dbReference type="GO" id="GO:0006412">
    <property type="term" value="P:translation"/>
    <property type="evidence" value="ECO:0007669"/>
    <property type="project" value="UniProtKB-UniRule"/>
</dbReference>
<dbReference type="FunFam" id="1.10.1620.10:FF:000001">
    <property type="entry name" value="60S ribosomal protein-like L39"/>
    <property type="match status" value="1"/>
</dbReference>
<dbReference type="Gene3D" id="1.10.1620.10">
    <property type="entry name" value="Ribosomal protein L39e"/>
    <property type="match status" value="1"/>
</dbReference>
<dbReference type="HAMAP" id="MF_00629">
    <property type="entry name" value="Ribosomal_eL39"/>
    <property type="match status" value="1"/>
</dbReference>
<dbReference type="InterPro" id="IPR000077">
    <property type="entry name" value="Ribosomal_eL39"/>
</dbReference>
<dbReference type="InterPro" id="IPR020083">
    <property type="entry name" value="Ribosomal_eL39_CS"/>
</dbReference>
<dbReference type="InterPro" id="IPR023626">
    <property type="entry name" value="Ribosomal_eL39_dom_sf"/>
</dbReference>
<dbReference type="NCBIfam" id="NF002316">
    <property type="entry name" value="PRK01242.1"/>
    <property type="match status" value="1"/>
</dbReference>
<dbReference type="PANTHER" id="PTHR19970:SF0">
    <property type="entry name" value="LARGE RIBOSOMAL SUBUNIT PROTEIN EL39"/>
    <property type="match status" value="1"/>
</dbReference>
<dbReference type="PANTHER" id="PTHR19970">
    <property type="entry name" value="RIBOSOMAL PROTEIN L39E"/>
    <property type="match status" value="1"/>
</dbReference>
<dbReference type="Pfam" id="PF00832">
    <property type="entry name" value="Ribosomal_L39"/>
    <property type="match status" value="1"/>
</dbReference>
<dbReference type="SUPFAM" id="SSF48662">
    <property type="entry name" value="Ribosomal protein L39e"/>
    <property type="match status" value="1"/>
</dbReference>
<dbReference type="PROSITE" id="PS00051">
    <property type="entry name" value="RIBOSOMAL_L39E"/>
    <property type="match status" value="1"/>
</dbReference>
<keyword id="KW-0687">Ribonucleoprotein</keyword>
<keyword id="KW-0689">Ribosomal protein</keyword>
<gene>
    <name type="primary">rpl39e</name>
    <name type="ordered locus">PH0529.1</name>
</gene>
<comment type="similarity">
    <text evidence="1">Belongs to the eukaryotic ribosomal protein eL39 family.</text>
</comment>
<name>RL39_PYRHO</name>
<evidence type="ECO:0000305" key="1"/>
<proteinExistence type="inferred from homology"/>
<reference key="1">
    <citation type="journal article" date="1998" name="DNA Res.">
        <title>Complete sequence and gene organization of the genome of a hyper-thermophilic archaebacterium, Pyrococcus horikoshii OT3.</title>
        <authorList>
            <person name="Kawarabayasi Y."/>
            <person name="Sawada M."/>
            <person name="Horikawa H."/>
            <person name="Haikawa Y."/>
            <person name="Hino Y."/>
            <person name="Yamamoto S."/>
            <person name="Sekine M."/>
            <person name="Baba S."/>
            <person name="Kosugi H."/>
            <person name="Hosoyama A."/>
            <person name="Nagai Y."/>
            <person name="Sakai M."/>
            <person name="Ogura K."/>
            <person name="Otsuka R."/>
            <person name="Nakazawa H."/>
            <person name="Takamiya M."/>
            <person name="Ohfuku Y."/>
            <person name="Funahashi T."/>
            <person name="Tanaka T."/>
            <person name="Kudoh Y."/>
            <person name="Yamazaki J."/>
            <person name="Kushida N."/>
            <person name="Oguchi A."/>
            <person name="Aoki K."/>
            <person name="Yoshizawa T."/>
            <person name="Nakamura Y."/>
            <person name="Robb F.T."/>
            <person name="Horikoshi K."/>
            <person name="Masuchi Y."/>
            <person name="Shizuya H."/>
            <person name="Kikuchi H."/>
        </authorList>
    </citation>
    <scope>NUCLEOTIDE SEQUENCE [LARGE SCALE GENOMIC DNA]</scope>
    <source>
        <strain>ATCC 700860 / DSM 12428 / JCM 9974 / NBRC 100139 / OT-3</strain>
    </source>
</reference>
<organism>
    <name type="scientific">Pyrococcus horikoshii (strain ATCC 700860 / DSM 12428 / JCM 9974 / NBRC 100139 / OT-3)</name>
    <dbReference type="NCBI Taxonomy" id="70601"/>
    <lineage>
        <taxon>Archaea</taxon>
        <taxon>Methanobacteriati</taxon>
        <taxon>Methanobacteriota</taxon>
        <taxon>Thermococci</taxon>
        <taxon>Thermococcales</taxon>
        <taxon>Thermococcaceae</taxon>
        <taxon>Pyrococcus</taxon>
    </lineage>
</organism>